<comment type="catalytic activity">
    <reaction evidence="1">
        <text>(S)-4-amino-5-oxopentanoate = 5-aminolevulinate</text>
        <dbReference type="Rhea" id="RHEA:14265"/>
        <dbReference type="ChEBI" id="CHEBI:57501"/>
        <dbReference type="ChEBI" id="CHEBI:356416"/>
        <dbReference type="EC" id="5.4.3.8"/>
    </reaction>
</comment>
<comment type="cofactor">
    <cofactor evidence="1">
        <name>pyridoxal 5'-phosphate</name>
        <dbReference type="ChEBI" id="CHEBI:597326"/>
    </cofactor>
</comment>
<comment type="pathway">
    <text evidence="1">Porphyrin-containing compound metabolism; protoporphyrin-IX biosynthesis; 5-aminolevulinate from L-glutamyl-tRNA(Glu): step 2/2.</text>
</comment>
<comment type="subunit">
    <text evidence="1">Homodimer.</text>
</comment>
<comment type="subcellular location">
    <subcellularLocation>
        <location evidence="1">Cytoplasm</location>
    </subcellularLocation>
</comment>
<comment type="similarity">
    <text evidence="1">Belongs to the class-III pyridoxal-phosphate-dependent aminotransferase family. HemL subfamily.</text>
</comment>
<proteinExistence type="inferred from homology"/>
<feature type="chain" id="PRO_0000243572" description="Glutamate-1-semialdehyde 2,1-aminomutase">
    <location>
        <begin position="1"/>
        <end position="452"/>
    </location>
</feature>
<feature type="modified residue" description="N6-(pyridoxal phosphate)lysine" evidence="1">
    <location>
        <position position="275"/>
    </location>
</feature>
<keyword id="KW-0963">Cytoplasm</keyword>
<keyword id="KW-0413">Isomerase</keyword>
<keyword id="KW-0627">Porphyrin biosynthesis</keyword>
<keyword id="KW-0663">Pyridoxal phosphate</keyword>
<keyword id="KW-1185">Reference proteome</keyword>
<reference key="1">
    <citation type="journal article" date="2007" name="Genome Res.">
        <title>Genome characteristics of facultatively symbiotic Frankia sp. strains reflect host range and host plant biogeography.</title>
        <authorList>
            <person name="Normand P."/>
            <person name="Lapierre P."/>
            <person name="Tisa L.S."/>
            <person name="Gogarten J.P."/>
            <person name="Alloisio N."/>
            <person name="Bagnarol E."/>
            <person name="Bassi C.A."/>
            <person name="Berry A.M."/>
            <person name="Bickhart D.M."/>
            <person name="Choisne N."/>
            <person name="Couloux A."/>
            <person name="Cournoyer B."/>
            <person name="Cruveiller S."/>
            <person name="Daubin V."/>
            <person name="Demange N."/>
            <person name="Francino M.P."/>
            <person name="Goltsman E."/>
            <person name="Huang Y."/>
            <person name="Kopp O.R."/>
            <person name="Labarre L."/>
            <person name="Lapidus A."/>
            <person name="Lavire C."/>
            <person name="Marechal J."/>
            <person name="Martinez M."/>
            <person name="Mastronunzio J.E."/>
            <person name="Mullin B.C."/>
            <person name="Niemann J."/>
            <person name="Pujic P."/>
            <person name="Rawnsley T."/>
            <person name="Rouy Z."/>
            <person name="Schenowitz C."/>
            <person name="Sellstedt A."/>
            <person name="Tavares F."/>
            <person name="Tomkins J.P."/>
            <person name="Vallenet D."/>
            <person name="Valverde C."/>
            <person name="Wall L.G."/>
            <person name="Wang Y."/>
            <person name="Medigue C."/>
            <person name="Benson D.R."/>
        </authorList>
    </citation>
    <scope>NUCLEOTIDE SEQUENCE [LARGE SCALE GENOMIC DNA]</scope>
    <source>
        <strain>DSM 45818 / CECT 9043 / HFP020203 / CcI3</strain>
    </source>
</reference>
<accession>Q2JFQ1</accession>
<sequence>MVVPSAAPASEELFRRAERVVPGGVNSPVRAFRAVGGTPRFMVAGNGPYLTDADGRTYIDLVCSWGPMILGHAHPAVVEAVSRAVSVGTSFGTPTPGEVELAELIVDRVGPVEKVRLVNSGTEATMSAVRLARGFTGRSTIIKFAGCYHGHVDALLASAGSGVATLGLPDTPGVTGAATADTIVLPYNDLALVEAVFVERGETIAAVITEAAAANMGVVPPLPGFNAGLRRLCDIHGALLILDEVMTGFRISRAGWWGNEGAIEDWSPDLFTFGKVMGGGLPAAAFGGRADVMARLAPAGPVYQAGTLSGNPIAVAAGLATLRACTDEVYATVDTRAADVAGIVSTALTEEGVAHLPSSAGSLFSFFFTDAATVVDYAGAQAQNTARYAAFFHSMLDAGIYLPPSAFEAWFVSAAHDDETVERIAAAAPAAARAAAAVPEPVTVSASPEGRA</sequence>
<organism>
    <name type="scientific">Frankia casuarinae (strain DSM 45818 / CECT 9043 / HFP020203 / CcI3)</name>
    <dbReference type="NCBI Taxonomy" id="106370"/>
    <lineage>
        <taxon>Bacteria</taxon>
        <taxon>Bacillati</taxon>
        <taxon>Actinomycetota</taxon>
        <taxon>Actinomycetes</taxon>
        <taxon>Frankiales</taxon>
        <taxon>Frankiaceae</taxon>
        <taxon>Frankia</taxon>
    </lineage>
</organism>
<name>GSA_FRACC</name>
<protein>
    <recommendedName>
        <fullName evidence="1">Glutamate-1-semialdehyde 2,1-aminomutase</fullName>
        <shortName evidence="1">GSA</shortName>
        <ecNumber evidence="1">5.4.3.8</ecNumber>
    </recommendedName>
    <alternativeName>
        <fullName evidence="1">Glutamate-1-semialdehyde aminotransferase</fullName>
        <shortName evidence="1">GSA-AT</shortName>
    </alternativeName>
</protein>
<evidence type="ECO:0000255" key="1">
    <source>
        <dbReference type="HAMAP-Rule" id="MF_00375"/>
    </source>
</evidence>
<gene>
    <name evidence="1" type="primary">hemL</name>
    <name type="ordered locus">Francci3_0507</name>
</gene>
<dbReference type="EC" id="5.4.3.8" evidence="1"/>
<dbReference type="EMBL" id="CP000249">
    <property type="protein sequence ID" value="ABD09891.1"/>
    <property type="molecule type" value="Genomic_DNA"/>
</dbReference>
<dbReference type="RefSeq" id="WP_011434967.1">
    <property type="nucleotide sequence ID" value="NZ_LRTJ01000013.1"/>
</dbReference>
<dbReference type="SMR" id="Q2JFQ1"/>
<dbReference type="STRING" id="106370.Francci3_0507"/>
<dbReference type="KEGG" id="fra:Francci3_0507"/>
<dbReference type="eggNOG" id="COG0001">
    <property type="taxonomic scope" value="Bacteria"/>
</dbReference>
<dbReference type="HOGENOM" id="CLU_016922_1_5_11"/>
<dbReference type="OrthoDB" id="9801052at2"/>
<dbReference type="PhylomeDB" id="Q2JFQ1"/>
<dbReference type="UniPathway" id="UPA00251">
    <property type="reaction ID" value="UER00317"/>
</dbReference>
<dbReference type="Proteomes" id="UP000001937">
    <property type="component" value="Chromosome"/>
</dbReference>
<dbReference type="GO" id="GO:0005737">
    <property type="term" value="C:cytoplasm"/>
    <property type="evidence" value="ECO:0007669"/>
    <property type="project" value="UniProtKB-SubCell"/>
</dbReference>
<dbReference type="GO" id="GO:0042286">
    <property type="term" value="F:glutamate-1-semialdehyde 2,1-aminomutase activity"/>
    <property type="evidence" value="ECO:0007669"/>
    <property type="project" value="UniProtKB-UniRule"/>
</dbReference>
<dbReference type="GO" id="GO:0030170">
    <property type="term" value="F:pyridoxal phosphate binding"/>
    <property type="evidence" value="ECO:0007669"/>
    <property type="project" value="InterPro"/>
</dbReference>
<dbReference type="GO" id="GO:0008483">
    <property type="term" value="F:transaminase activity"/>
    <property type="evidence" value="ECO:0007669"/>
    <property type="project" value="InterPro"/>
</dbReference>
<dbReference type="GO" id="GO:0006782">
    <property type="term" value="P:protoporphyrinogen IX biosynthetic process"/>
    <property type="evidence" value="ECO:0007669"/>
    <property type="project" value="UniProtKB-UniRule"/>
</dbReference>
<dbReference type="CDD" id="cd00610">
    <property type="entry name" value="OAT_like"/>
    <property type="match status" value="1"/>
</dbReference>
<dbReference type="FunFam" id="3.40.640.10:FF:000021">
    <property type="entry name" value="Glutamate-1-semialdehyde 2,1-aminomutase"/>
    <property type="match status" value="1"/>
</dbReference>
<dbReference type="Gene3D" id="3.90.1150.10">
    <property type="entry name" value="Aspartate Aminotransferase, domain 1"/>
    <property type="match status" value="1"/>
</dbReference>
<dbReference type="Gene3D" id="3.40.640.10">
    <property type="entry name" value="Type I PLP-dependent aspartate aminotransferase-like (Major domain)"/>
    <property type="match status" value="1"/>
</dbReference>
<dbReference type="HAMAP" id="MF_00375">
    <property type="entry name" value="HemL_aminotrans_3"/>
    <property type="match status" value="1"/>
</dbReference>
<dbReference type="InterPro" id="IPR004639">
    <property type="entry name" value="4pyrrol_synth_GluAld_NH2Trfase"/>
</dbReference>
<dbReference type="InterPro" id="IPR005814">
    <property type="entry name" value="Aminotrans_3"/>
</dbReference>
<dbReference type="InterPro" id="IPR049704">
    <property type="entry name" value="Aminotrans_3_PPA_site"/>
</dbReference>
<dbReference type="InterPro" id="IPR015424">
    <property type="entry name" value="PyrdxlP-dep_Trfase"/>
</dbReference>
<dbReference type="InterPro" id="IPR015421">
    <property type="entry name" value="PyrdxlP-dep_Trfase_major"/>
</dbReference>
<dbReference type="InterPro" id="IPR015422">
    <property type="entry name" value="PyrdxlP-dep_Trfase_small"/>
</dbReference>
<dbReference type="NCBIfam" id="TIGR00713">
    <property type="entry name" value="hemL"/>
    <property type="match status" value="1"/>
</dbReference>
<dbReference type="NCBIfam" id="NF000818">
    <property type="entry name" value="PRK00062.1"/>
    <property type="match status" value="1"/>
</dbReference>
<dbReference type="PANTHER" id="PTHR43713">
    <property type="entry name" value="GLUTAMATE-1-SEMIALDEHYDE 2,1-AMINOMUTASE"/>
    <property type="match status" value="1"/>
</dbReference>
<dbReference type="PANTHER" id="PTHR43713:SF3">
    <property type="entry name" value="GLUTAMATE-1-SEMIALDEHYDE 2,1-AMINOMUTASE 1, CHLOROPLASTIC-RELATED"/>
    <property type="match status" value="1"/>
</dbReference>
<dbReference type="Pfam" id="PF00202">
    <property type="entry name" value="Aminotran_3"/>
    <property type="match status" value="1"/>
</dbReference>
<dbReference type="SUPFAM" id="SSF53383">
    <property type="entry name" value="PLP-dependent transferases"/>
    <property type="match status" value="1"/>
</dbReference>
<dbReference type="PROSITE" id="PS00600">
    <property type="entry name" value="AA_TRANSFER_CLASS_3"/>
    <property type="match status" value="1"/>
</dbReference>